<evidence type="ECO:0000255" key="1">
    <source>
        <dbReference type="HAMAP-Rule" id="MF_01241"/>
    </source>
</evidence>
<feature type="chain" id="PRO_1000067025" description="Glucosamine-6-phosphate deaminase">
    <location>
        <begin position="1"/>
        <end position="252"/>
    </location>
</feature>
<feature type="active site" description="Proton acceptor; for enolization step" evidence="1">
    <location>
        <position position="67"/>
    </location>
</feature>
<feature type="active site" description="For ring-opening step" evidence="1">
    <location>
        <position position="137"/>
    </location>
</feature>
<feature type="active site" description="Proton acceptor; for ring-opening step" evidence="1">
    <location>
        <position position="139"/>
    </location>
</feature>
<feature type="active site" description="For ring-opening step" evidence="1">
    <location>
        <position position="144"/>
    </location>
</feature>
<organism>
    <name type="scientific">Staphylococcus aureus (strain bovine RF122 / ET3-1)</name>
    <dbReference type="NCBI Taxonomy" id="273036"/>
    <lineage>
        <taxon>Bacteria</taxon>
        <taxon>Bacillati</taxon>
        <taxon>Bacillota</taxon>
        <taxon>Bacilli</taxon>
        <taxon>Bacillales</taxon>
        <taxon>Staphylococcaceae</taxon>
        <taxon>Staphylococcus</taxon>
    </lineage>
</organism>
<sequence>MKVLNLGSKKQASFYVACELYKEMAFNQHCKLGLATGGTMTDLYEQLVKLLNKNQLNVDNVSTFNLDEYVGLTASHPQSYHYYMDAMLFKQYPYFNRKNIHIPNGDADDMNAEASKYNDVLEQQGQRDIQILGIGENGHIGFNEPGTPFDSVTHIVDLTESTIKANSRYFENEDDVPKQAISMGLANILQAKRIILLAFGEKKRAAITHLLNQEISVDVPATLLHKHPNVEIYLDDEACPKNVAKIHVDEMD</sequence>
<accession>Q2YS95</accession>
<name>NAGB_STAAB</name>
<protein>
    <recommendedName>
        <fullName evidence="1">Glucosamine-6-phosphate deaminase</fullName>
        <ecNumber evidence="1">3.5.99.6</ecNumber>
    </recommendedName>
    <alternativeName>
        <fullName evidence="1">GlcN6P deaminase</fullName>
        <shortName evidence="1">GNPDA</shortName>
    </alternativeName>
    <alternativeName>
        <fullName evidence="1">Glucosamine-6-phosphate isomerase</fullName>
    </alternativeName>
</protein>
<reference key="1">
    <citation type="journal article" date="2007" name="PLoS ONE">
        <title>Molecular correlates of host specialization in Staphylococcus aureus.</title>
        <authorList>
            <person name="Herron-Olson L."/>
            <person name="Fitzgerald J.R."/>
            <person name="Musser J.M."/>
            <person name="Kapur V."/>
        </authorList>
    </citation>
    <scope>NUCLEOTIDE SEQUENCE [LARGE SCALE GENOMIC DNA]</scope>
    <source>
        <strain>bovine RF122 / ET3-1</strain>
    </source>
</reference>
<keyword id="KW-0119">Carbohydrate metabolism</keyword>
<keyword id="KW-0378">Hydrolase</keyword>
<proteinExistence type="inferred from homology"/>
<comment type="function">
    <text evidence="1">Catalyzes the reversible isomerization-deamination of glucosamine 6-phosphate (GlcN6P) to form fructose 6-phosphate (Fru6P) and ammonium ion.</text>
</comment>
<comment type="catalytic activity">
    <reaction evidence="1">
        <text>alpha-D-glucosamine 6-phosphate + H2O = beta-D-fructose 6-phosphate + NH4(+)</text>
        <dbReference type="Rhea" id="RHEA:12172"/>
        <dbReference type="ChEBI" id="CHEBI:15377"/>
        <dbReference type="ChEBI" id="CHEBI:28938"/>
        <dbReference type="ChEBI" id="CHEBI:57634"/>
        <dbReference type="ChEBI" id="CHEBI:75989"/>
        <dbReference type="EC" id="3.5.99.6"/>
    </reaction>
</comment>
<comment type="pathway">
    <text evidence="1">Amino-sugar metabolism; N-acetylneuraminate degradation; D-fructose 6-phosphate from N-acetylneuraminate: step 5/5.</text>
</comment>
<comment type="similarity">
    <text evidence="1">Belongs to the glucosamine/galactosamine-6-phosphate isomerase family. NagB subfamily.</text>
</comment>
<dbReference type="EC" id="3.5.99.6" evidence="1"/>
<dbReference type="EMBL" id="AJ938182">
    <property type="protein sequence ID" value="CAI80207.1"/>
    <property type="molecule type" value="Genomic_DNA"/>
</dbReference>
<dbReference type="RefSeq" id="WP_000866408.1">
    <property type="nucleotide sequence ID" value="NC_007622.1"/>
</dbReference>
<dbReference type="SMR" id="Q2YS95"/>
<dbReference type="KEGG" id="sab:SAB0519"/>
<dbReference type="HOGENOM" id="CLU_049611_1_1_9"/>
<dbReference type="UniPathway" id="UPA00629">
    <property type="reaction ID" value="UER00684"/>
</dbReference>
<dbReference type="GO" id="GO:0005737">
    <property type="term" value="C:cytoplasm"/>
    <property type="evidence" value="ECO:0007669"/>
    <property type="project" value="TreeGrafter"/>
</dbReference>
<dbReference type="GO" id="GO:0004342">
    <property type="term" value="F:glucosamine-6-phosphate deaminase activity"/>
    <property type="evidence" value="ECO:0007669"/>
    <property type="project" value="UniProtKB-UniRule"/>
</dbReference>
<dbReference type="GO" id="GO:0042802">
    <property type="term" value="F:identical protein binding"/>
    <property type="evidence" value="ECO:0007669"/>
    <property type="project" value="TreeGrafter"/>
</dbReference>
<dbReference type="GO" id="GO:0005975">
    <property type="term" value="P:carbohydrate metabolic process"/>
    <property type="evidence" value="ECO:0007669"/>
    <property type="project" value="InterPro"/>
</dbReference>
<dbReference type="GO" id="GO:0006043">
    <property type="term" value="P:glucosamine catabolic process"/>
    <property type="evidence" value="ECO:0007669"/>
    <property type="project" value="TreeGrafter"/>
</dbReference>
<dbReference type="GO" id="GO:0006046">
    <property type="term" value="P:N-acetylglucosamine catabolic process"/>
    <property type="evidence" value="ECO:0007669"/>
    <property type="project" value="TreeGrafter"/>
</dbReference>
<dbReference type="GO" id="GO:0019262">
    <property type="term" value="P:N-acetylneuraminate catabolic process"/>
    <property type="evidence" value="ECO:0007669"/>
    <property type="project" value="UniProtKB-UniRule"/>
</dbReference>
<dbReference type="CDD" id="cd01399">
    <property type="entry name" value="GlcN6P_deaminase"/>
    <property type="match status" value="1"/>
</dbReference>
<dbReference type="FunFam" id="3.40.50.1360:FF:000003">
    <property type="entry name" value="Glucosamine-6-phosphate deaminase"/>
    <property type="match status" value="1"/>
</dbReference>
<dbReference type="Gene3D" id="3.40.50.1360">
    <property type="match status" value="1"/>
</dbReference>
<dbReference type="HAMAP" id="MF_01241">
    <property type="entry name" value="GlcN6P_deamin"/>
    <property type="match status" value="1"/>
</dbReference>
<dbReference type="InterPro" id="IPR006148">
    <property type="entry name" value="Glc/Gal-6P_isomerase"/>
</dbReference>
<dbReference type="InterPro" id="IPR004547">
    <property type="entry name" value="Glucosamine6P_isomerase"/>
</dbReference>
<dbReference type="InterPro" id="IPR018321">
    <property type="entry name" value="Glucosamine6P_isomerase_CS"/>
</dbReference>
<dbReference type="InterPro" id="IPR037171">
    <property type="entry name" value="NagB/RpiA_transferase-like"/>
</dbReference>
<dbReference type="NCBIfam" id="TIGR00502">
    <property type="entry name" value="nagB"/>
    <property type="match status" value="1"/>
</dbReference>
<dbReference type="PANTHER" id="PTHR11280">
    <property type="entry name" value="GLUCOSAMINE-6-PHOSPHATE ISOMERASE"/>
    <property type="match status" value="1"/>
</dbReference>
<dbReference type="PANTHER" id="PTHR11280:SF5">
    <property type="entry name" value="GLUCOSAMINE-6-PHOSPHATE ISOMERASE"/>
    <property type="match status" value="1"/>
</dbReference>
<dbReference type="Pfam" id="PF01182">
    <property type="entry name" value="Glucosamine_iso"/>
    <property type="match status" value="1"/>
</dbReference>
<dbReference type="SUPFAM" id="SSF100950">
    <property type="entry name" value="NagB/RpiA/CoA transferase-like"/>
    <property type="match status" value="1"/>
</dbReference>
<dbReference type="PROSITE" id="PS01161">
    <property type="entry name" value="GLC_GALNAC_ISOMERASE"/>
    <property type="match status" value="1"/>
</dbReference>
<gene>
    <name evidence="1" type="primary">nagB</name>
    <name type="ordered locus">SAB0519</name>
</gene>